<reference key="1">
    <citation type="journal article" date="2008" name="EMBO J.">
        <title>ABAP1 is a novel plant Armadillo BTB protein involved in DNA replication and transcription.</title>
        <authorList>
            <person name="Masuda H.P."/>
            <person name="Cabral L.M."/>
            <person name="De Veylder L."/>
            <person name="Tanurdzic M."/>
            <person name="de Almeida Engler J."/>
            <person name="Geelen D."/>
            <person name="Inze D."/>
            <person name="Martienssen R.A."/>
            <person name="Ferreira P.C."/>
            <person name="Hemerly A.S."/>
        </authorList>
    </citation>
    <scope>NUCLEOTIDE SEQUENCE [MRNA]</scope>
    <scope>FUNCTION</scope>
    <scope>IDENTIFICATION IN ABAP1-TCP24 COMPLEX</scope>
    <scope>INTERACTION WITH ORC1A; ORC1B; CDT1A; CDT1B</scope>
    <scope>SUBCELLULAR LOCATION</scope>
    <scope>TISSUE SPECIFICITY</scope>
    <scope>DEVELOPMENTAL STAGE</scope>
    <source>
        <strain>cv. Columbia</strain>
    </source>
</reference>
<reference key="2">
    <citation type="journal article" date="2000" name="Nature">
        <title>Sequence and analysis of chromosome 5 of the plant Arabidopsis thaliana.</title>
        <authorList>
            <person name="Tabata S."/>
            <person name="Kaneko T."/>
            <person name="Nakamura Y."/>
            <person name="Kotani H."/>
            <person name="Kato T."/>
            <person name="Asamizu E."/>
            <person name="Miyajima N."/>
            <person name="Sasamoto S."/>
            <person name="Kimura T."/>
            <person name="Hosouchi T."/>
            <person name="Kawashima K."/>
            <person name="Kohara M."/>
            <person name="Matsumoto M."/>
            <person name="Matsuno A."/>
            <person name="Muraki A."/>
            <person name="Nakayama S."/>
            <person name="Nakazaki N."/>
            <person name="Naruo K."/>
            <person name="Okumura S."/>
            <person name="Shinpo S."/>
            <person name="Takeuchi C."/>
            <person name="Wada T."/>
            <person name="Watanabe A."/>
            <person name="Yamada M."/>
            <person name="Yasuda M."/>
            <person name="Sato S."/>
            <person name="de la Bastide M."/>
            <person name="Huang E."/>
            <person name="Spiegel L."/>
            <person name="Gnoj L."/>
            <person name="O'Shaughnessy A."/>
            <person name="Preston R."/>
            <person name="Habermann K."/>
            <person name="Murray J."/>
            <person name="Johnson D."/>
            <person name="Rohlfing T."/>
            <person name="Nelson J."/>
            <person name="Stoneking T."/>
            <person name="Pepin K."/>
            <person name="Spieth J."/>
            <person name="Sekhon M."/>
            <person name="Armstrong J."/>
            <person name="Becker M."/>
            <person name="Belter E."/>
            <person name="Cordum H."/>
            <person name="Cordes M."/>
            <person name="Courtney L."/>
            <person name="Courtney W."/>
            <person name="Dante M."/>
            <person name="Du H."/>
            <person name="Edwards J."/>
            <person name="Fryman J."/>
            <person name="Haakensen B."/>
            <person name="Lamar E."/>
            <person name="Latreille P."/>
            <person name="Leonard S."/>
            <person name="Meyer R."/>
            <person name="Mulvaney E."/>
            <person name="Ozersky P."/>
            <person name="Riley A."/>
            <person name="Strowmatt C."/>
            <person name="Wagner-McPherson C."/>
            <person name="Wollam A."/>
            <person name="Yoakum M."/>
            <person name="Bell M."/>
            <person name="Dedhia N."/>
            <person name="Parnell L."/>
            <person name="Shah R."/>
            <person name="Rodriguez M."/>
            <person name="Hoon See L."/>
            <person name="Vil D."/>
            <person name="Baker J."/>
            <person name="Kirchoff K."/>
            <person name="Toth K."/>
            <person name="King L."/>
            <person name="Bahret A."/>
            <person name="Miller B."/>
            <person name="Marra M.A."/>
            <person name="Martienssen R."/>
            <person name="McCombie W.R."/>
            <person name="Wilson R.K."/>
            <person name="Murphy G."/>
            <person name="Bancroft I."/>
            <person name="Volckaert G."/>
            <person name="Wambutt R."/>
            <person name="Duesterhoeft A."/>
            <person name="Stiekema W."/>
            <person name="Pohl T."/>
            <person name="Entian K.-D."/>
            <person name="Terryn N."/>
            <person name="Hartley N."/>
            <person name="Bent E."/>
            <person name="Johnson S."/>
            <person name="Langham S.-A."/>
            <person name="McCullagh B."/>
            <person name="Robben J."/>
            <person name="Grymonprez B."/>
            <person name="Zimmermann W."/>
            <person name="Ramsperger U."/>
            <person name="Wedler H."/>
            <person name="Balke K."/>
            <person name="Wedler E."/>
            <person name="Peters S."/>
            <person name="van Staveren M."/>
            <person name="Dirkse W."/>
            <person name="Mooijman P."/>
            <person name="Klein Lankhorst R."/>
            <person name="Weitzenegger T."/>
            <person name="Bothe G."/>
            <person name="Rose M."/>
            <person name="Hauf J."/>
            <person name="Berneiser S."/>
            <person name="Hempel S."/>
            <person name="Feldpausch M."/>
            <person name="Lamberth S."/>
            <person name="Villarroel R."/>
            <person name="Gielen J."/>
            <person name="Ardiles W."/>
            <person name="Bents O."/>
            <person name="Lemcke K."/>
            <person name="Kolesov G."/>
            <person name="Mayer K.F.X."/>
            <person name="Rudd S."/>
            <person name="Schoof H."/>
            <person name="Schueller C."/>
            <person name="Zaccaria P."/>
            <person name="Mewes H.-W."/>
            <person name="Bevan M."/>
            <person name="Fransz P.F."/>
        </authorList>
    </citation>
    <scope>NUCLEOTIDE SEQUENCE [LARGE SCALE GENOMIC DNA]</scope>
    <source>
        <strain>cv. Columbia</strain>
    </source>
</reference>
<reference key="3">
    <citation type="journal article" date="2017" name="Plant J.">
        <title>Araport11: a complete reannotation of the Arabidopsis thaliana reference genome.</title>
        <authorList>
            <person name="Cheng C.Y."/>
            <person name="Krishnakumar V."/>
            <person name="Chan A.P."/>
            <person name="Thibaud-Nissen F."/>
            <person name="Schobel S."/>
            <person name="Town C.D."/>
        </authorList>
    </citation>
    <scope>GENOME REANNOTATION</scope>
    <source>
        <strain>cv. Columbia</strain>
    </source>
</reference>
<reference key="4">
    <citation type="journal article" date="2003" name="Science">
        <title>Empirical analysis of transcriptional activity in the Arabidopsis genome.</title>
        <authorList>
            <person name="Yamada K."/>
            <person name="Lim J."/>
            <person name="Dale J.M."/>
            <person name="Chen H."/>
            <person name="Shinn P."/>
            <person name="Palm C.J."/>
            <person name="Southwick A.M."/>
            <person name="Wu H.C."/>
            <person name="Kim C.J."/>
            <person name="Nguyen M."/>
            <person name="Pham P.K."/>
            <person name="Cheuk R.F."/>
            <person name="Karlin-Newmann G."/>
            <person name="Liu S.X."/>
            <person name="Lam B."/>
            <person name="Sakano H."/>
            <person name="Wu T."/>
            <person name="Yu G."/>
            <person name="Miranda M."/>
            <person name="Quach H.L."/>
            <person name="Tripp M."/>
            <person name="Chang C.H."/>
            <person name="Lee J.M."/>
            <person name="Toriumi M.J."/>
            <person name="Chan M.M."/>
            <person name="Tang C.C."/>
            <person name="Onodera C.S."/>
            <person name="Deng J.M."/>
            <person name="Akiyama K."/>
            <person name="Ansari Y."/>
            <person name="Arakawa T."/>
            <person name="Banh J."/>
            <person name="Banno F."/>
            <person name="Bowser L."/>
            <person name="Brooks S.Y."/>
            <person name="Carninci P."/>
            <person name="Chao Q."/>
            <person name="Choy N."/>
            <person name="Enju A."/>
            <person name="Goldsmith A.D."/>
            <person name="Gurjal M."/>
            <person name="Hansen N.F."/>
            <person name="Hayashizaki Y."/>
            <person name="Johnson-Hopson C."/>
            <person name="Hsuan V.W."/>
            <person name="Iida K."/>
            <person name="Karnes M."/>
            <person name="Khan S."/>
            <person name="Koesema E."/>
            <person name="Ishida J."/>
            <person name="Jiang P.X."/>
            <person name="Jones T."/>
            <person name="Kawai J."/>
            <person name="Kamiya A."/>
            <person name="Meyers C."/>
            <person name="Nakajima M."/>
            <person name="Narusaka M."/>
            <person name="Seki M."/>
            <person name="Sakurai T."/>
            <person name="Satou M."/>
            <person name="Tamse R."/>
            <person name="Vaysberg M."/>
            <person name="Wallender E.K."/>
            <person name="Wong C."/>
            <person name="Yamamura Y."/>
            <person name="Yuan S."/>
            <person name="Shinozaki K."/>
            <person name="Davis R.W."/>
            <person name="Theologis A."/>
            <person name="Ecker J.R."/>
        </authorList>
    </citation>
    <scope>NUCLEOTIDE SEQUENCE [LARGE SCALE MRNA] OF 2-737</scope>
    <source>
        <strain>cv. Columbia</strain>
    </source>
</reference>
<reference key="5">
    <citation type="journal article" date="2005" name="J. Biol. Chem.">
        <title>Cullins 3a and 3b assemble with members of the broad complex/tramtrack/bric-a-brac (BTB) protein family to form essential ubiquitin-protein ligases (E3s) in Arabidopsis.</title>
        <authorList>
            <person name="Gingerich D.J."/>
            <person name="Gagne J.M."/>
            <person name="Salter D.W."/>
            <person name="Hellmann H."/>
            <person name="Estelle M."/>
            <person name="Ma L."/>
            <person name="Vierstra R.D."/>
        </authorList>
    </citation>
    <scope>DOMAIN BTB</scope>
</reference>
<reference key="6">
    <citation type="journal article" date="2015" name="BMC Plant Biol.">
        <title>AIP1 is a novel Agenet/Tudor domain protein from Arabidopsis that interacts with regulators of DNA replication, transcription and chromatin remodeling.</title>
        <authorList>
            <person name="Brasil J.N."/>
            <person name="Cabral L.M."/>
            <person name="Eloy N.B."/>
            <person name="Primo L.M."/>
            <person name="Barroso-Neto I.L."/>
            <person name="Grangeiro L.P."/>
            <person name="Gonzalez N."/>
            <person name="Inze D."/>
            <person name="Ferreira P.C."/>
            <person name="Hemerly A.S."/>
        </authorList>
    </citation>
    <scope>INTERACTION WITH DUF7/AIP1</scope>
</reference>
<gene>
    <name type="primary">ABAP1</name>
    <name type="ordered locus">At5g13060</name>
    <name type="ORF">T19L5.20</name>
</gene>
<accession>B7U179</accession>
<accession>Q8RY88</accession>
<accession>Q9FYA4</accession>
<keyword id="KW-0539">Nucleus</keyword>
<keyword id="KW-1185">Reference proteome</keyword>
<keyword id="KW-0677">Repeat</keyword>
<keyword id="KW-0833">Ubl conjugation pathway</keyword>
<feature type="chain" id="PRO_0000405807" description="ARMADILLO BTB ARABIDOPSIS PROTEIN 1">
    <location>
        <begin position="1"/>
        <end position="737"/>
    </location>
</feature>
<feature type="repeat" description="ARM 1">
    <location>
        <begin position="112"/>
        <end position="154"/>
    </location>
</feature>
<feature type="repeat" description="ARM 2">
    <location>
        <begin position="165"/>
        <end position="212"/>
    </location>
</feature>
<feature type="repeat" description="ARM 3">
    <location>
        <begin position="215"/>
        <end position="254"/>
    </location>
</feature>
<feature type="repeat" description="ARM 4">
    <location>
        <begin position="257"/>
        <end position="296"/>
    </location>
</feature>
<feature type="repeat" description="ARM 5">
    <location>
        <begin position="299"/>
        <end position="338"/>
    </location>
</feature>
<feature type="repeat" description="ARM 6">
    <location>
        <begin position="341"/>
        <end position="380"/>
    </location>
</feature>
<feature type="repeat" description="ARM 7">
    <location>
        <begin position="382"/>
        <end position="421"/>
    </location>
</feature>
<feature type="repeat" description="ARM 8">
    <location>
        <begin position="456"/>
        <end position="495"/>
    </location>
</feature>
<feature type="repeat" description="ARM 9">
    <location>
        <begin position="497"/>
        <end position="536"/>
    </location>
</feature>
<feature type="domain" description="BTB" evidence="2">
    <location>
        <begin position="568"/>
        <end position="635"/>
    </location>
</feature>
<organism>
    <name type="scientific">Arabidopsis thaliana</name>
    <name type="common">Mouse-ear cress</name>
    <dbReference type="NCBI Taxonomy" id="3702"/>
    <lineage>
        <taxon>Eukaryota</taxon>
        <taxon>Viridiplantae</taxon>
        <taxon>Streptophyta</taxon>
        <taxon>Embryophyta</taxon>
        <taxon>Tracheophyta</taxon>
        <taxon>Spermatophyta</taxon>
        <taxon>Magnoliopsida</taxon>
        <taxon>eudicotyledons</taxon>
        <taxon>Gunneridae</taxon>
        <taxon>Pentapetalae</taxon>
        <taxon>rosids</taxon>
        <taxon>malvids</taxon>
        <taxon>Brassicales</taxon>
        <taxon>Brassicaceae</taxon>
        <taxon>Camelineae</taxon>
        <taxon>Arabidopsis</taxon>
    </lineage>
</organism>
<protein>
    <recommendedName>
        <fullName>ARMADILLO BTB ARABIDOPSIS PROTEIN 1</fullName>
        <shortName>ABAP1</shortName>
    </recommendedName>
</protein>
<proteinExistence type="evidence at protein level"/>
<dbReference type="EMBL" id="FJ422582">
    <property type="protein sequence ID" value="ACJ46331.1"/>
    <property type="molecule type" value="mRNA"/>
</dbReference>
<dbReference type="EMBL" id="AL391711">
    <property type="protein sequence ID" value="CAC05434.1"/>
    <property type="status" value="ALT_SEQ"/>
    <property type="molecule type" value="Genomic_DNA"/>
</dbReference>
<dbReference type="EMBL" id="CP002688">
    <property type="protein sequence ID" value="AED91846.1"/>
    <property type="molecule type" value="Genomic_DNA"/>
</dbReference>
<dbReference type="EMBL" id="AY074524">
    <property type="protein sequence ID" value="AAL69492.1"/>
    <property type="molecule type" value="mRNA"/>
</dbReference>
<dbReference type="RefSeq" id="NP_196810.5">
    <property type="nucleotide sequence ID" value="NM_121309.6"/>
</dbReference>
<dbReference type="SMR" id="B7U179"/>
<dbReference type="BioGRID" id="16423">
    <property type="interactions" value="9"/>
</dbReference>
<dbReference type="FunCoup" id="B7U179">
    <property type="interactions" value="18"/>
</dbReference>
<dbReference type="IntAct" id="B7U179">
    <property type="interactions" value="8"/>
</dbReference>
<dbReference type="MINT" id="B7U179"/>
<dbReference type="STRING" id="3702.B7U179"/>
<dbReference type="iPTMnet" id="B7U179"/>
<dbReference type="PaxDb" id="3702-AT5G13060.1"/>
<dbReference type="ProteomicsDB" id="244613"/>
<dbReference type="EnsemblPlants" id="AT5G13060.1">
    <property type="protein sequence ID" value="AT5G13060.1"/>
    <property type="gene ID" value="AT5G13060"/>
</dbReference>
<dbReference type="GeneID" id="831145"/>
<dbReference type="Gramene" id="AT5G13060.1">
    <property type="protein sequence ID" value="AT5G13060.1"/>
    <property type="gene ID" value="AT5G13060"/>
</dbReference>
<dbReference type="KEGG" id="ath:AT5G13060"/>
<dbReference type="Araport" id="AT5G13060"/>
<dbReference type="TAIR" id="AT5G13060">
    <property type="gene designation" value="ABAP1"/>
</dbReference>
<dbReference type="eggNOG" id="KOG0167">
    <property type="taxonomic scope" value="Eukaryota"/>
</dbReference>
<dbReference type="HOGENOM" id="CLU_392026_0_0_1"/>
<dbReference type="InParanoid" id="B7U179"/>
<dbReference type="OMA" id="MYELADT"/>
<dbReference type="OrthoDB" id="29145at2759"/>
<dbReference type="PhylomeDB" id="B7U179"/>
<dbReference type="UniPathway" id="UPA00143"/>
<dbReference type="PRO" id="PR:B7U179"/>
<dbReference type="Proteomes" id="UP000006548">
    <property type="component" value="Chromosome 5"/>
</dbReference>
<dbReference type="ExpressionAtlas" id="B7U179">
    <property type="expression patterns" value="baseline and differential"/>
</dbReference>
<dbReference type="GO" id="GO:0031261">
    <property type="term" value="C:DNA replication preinitiation complex"/>
    <property type="evidence" value="ECO:0000314"/>
    <property type="project" value="TAIR"/>
</dbReference>
<dbReference type="GO" id="GO:0005634">
    <property type="term" value="C:nucleus"/>
    <property type="evidence" value="ECO:0000314"/>
    <property type="project" value="UniProtKB"/>
</dbReference>
<dbReference type="GO" id="GO:0006261">
    <property type="term" value="P:DNA-templated DNA replication"/>
    <property type="evidence" value="ECO:0000304"/>
    <property type="project" value="TAIR"/>
</dbReference>
<dbReference type="GO" id="GO:0008285">
    <property type="term" value="P:negative regulation of cell population proliferation"/>
    <property type="evidence" value="ECO:0000315"/>
    <property type="project" value="UniProtKB"/>
</dbReference>
<dbReference type="GO" id="GO:2000104">
    <property type="term" value="P:negative regulation of DNA-templated DNA replication"/>
    <property type="evidence" value="ECO:0000315"/>
    <property type="project" value="UniProtKB"/>
</dbReference>
<dbReference type="GO" id="GO:0016567">
    <property type="term" value="P:protein ubiquitination"/>
    <property type="evidence" value="ECO:0007669"/>
    <property type="project" value="UniProtKB-UniPathway"/>
</dbReference>
<dbReference type="GO" id="GO:0042127">
    <property type="term" value="P:regulation of cell population proliferation"/>
    <property type="evidence" value="ECO:0000315"/>
    <property type="project" value="TAIR"/>
</dbReference>
<dbReference type="CDD" id="cd18352">
    <property type="entry name" value="BTB_POZ_ARIA_plant"/>
    <property type="match status" value="1"/>
</dbReference>
<dbReference type="Gene3D" id="1.25.10.10">
    <property type="entry name" value="Leucine-rich Repeat Variant"/>
    <property type="match status" value="4"/>
</dbReference>
<dbReference type="Gene3D" id="3.30.710.10">
    <property type="entry name" value="Potassium Channel Kv1.1, Chain A"/>
    <property type="match status" value="1"/>
</dbReference>
<dbReference type="InterPro" id="IPR044282">
    <property type="entry name" value="ABAP1/ARIA"/>
</dbReference>
<dbReference type="InterPro" id="IPR011989">
    <property type="entry name" value="ARM-like"/>
</dbReference>
<dbReference type="InterPro" id="IPR016024">
    <property type="entry name" value="ARM-type_fold"/>
</dbReference>
<dbReference type="InterPro" id="IPR000225">
    <property type="entry name" value="Armadillo"/>
</dbReference>
<dbReference type="InterPro" id="IPR000210">
    <property type="entry name" value="BTB/POZ_dom"/>
</dbReference>
<dbReference type="InterPro" id="IPR011333">
    <property type="entry name" value="SKP1/BTB/POZ_sf"/>
</dbReference>
<dbReference type="PANTHER" id="PTHR46710">
    <property type="entry name" value="ARM REPEAT PROTEIN INTERACTING WITH ABF2"/>
    <property type="match status" value="1"/>
</dbReference>
<dbReference type="PANTHER" id="PTHR46710:SF11">
    <property type="entry name" value="ARMADILLO BTB ARABIDOPSIS PROTEIN 1"/>
    <property type="match status" value="1"/>
</dbReference>
<dbReference type="Pfam" id="PF00514">
    <property type="entry name" value="Arm"/>
    <property type="match status" value="3"/>
</dbReference>
<dbReference type="Pfam" id="PF00651">
    <property type="entry name" value="BTB"/>
    <property type="match status" value="1"/>
</dbReference>
<dbReference type="SMART" id="SM00185">
    <property type="entry name" value="ARM"/>
    <property type="match status" value="8"/>
</dbReference>
<dbReference type="SMART" id="SM00225">
    <property type="entry name" value="BTB"/>
    <property type="match status" value="1"/>
</dbReference>
<dbReference type="SUPFAM" id="SSF48371">
    <property type="entry name" value="ARM repeat"/>
    <property type="match status" value="2"/>
</dbReference>
<dbReference type="SUPFAM" id="SSF54695">
    <property type="entry name" value="POZ domain"/>
    <property type="match status" value="1"/>
</dbReference>
<dbReference type="PROSITE" id="PS50176">
    <property type="entry name" value="ARM_REPEAT"/>
    <property type="match status" value="4"/>
</dbReference>
<dbReference type="PROSITE" id="PS50097">
    <property type="entry name" value="BTB"/>
    <property type="match status" value="1"/>
</dbReference>
<sequence>MIISKSFKAPLKFSVKSSTAPVISNHPPMENHPKRQRTTRLAARNLKRKLSHNTDGAPIVTQLIDIDDEPIDLVVAIRRHVEVLNSSFSDPDFDHEAVKEAAADIADLAKIDENVEIIVENGAIPALVRYLESPLVVCGNVPKSCEHKLEKDCALALGLIAAIQPGYQQLIVDAGAIVPTVKLLKRRGECGECMFANAVIRRAADIITNIAHDNPRIKTNIRVEGGIAPLVELLNFPDVKVQRAAAGALRTVSFRNDENKSQIVELNALPTLVLMLQSQDSTVHGEAIGAIGNLVHSSPDIKKEVIRAGALQPVIGLLSSTCLETQREAALLIGQFAAPDSDCKVHIAQRGAITPLIKMLESSDEQVVEMSAFALGRLAQDAHNQAGIAHRGGIISLLNLLDVKTGSVQHNAAFALYGLADNEENVADFIKAGGIQKLQDDNFTVQPTRDCVVRTLKRLQNKIHGPVLNQLLYLMRTAEKTVQIRIALALAHLCDPKDGKLIFIDNNGVEFLLELLYFSSNKQQRYSSSALYELAKKATSFAPEDSAPCSPTQQVFLGEKFVNNPTMSDVTFLIDGKQFYAHKIGLVASSDIFRAMFDGLYKERNAQNVEIPNIRWEVFELMMKFIYSGRINIAKHLAKDLLVAADQYLLEGLKRQCEYTIAQEICLDNIPEMYELADTFNASALRRACTLFVLEHFTKLSSQLWFAKFVKQIIPEIRSYMTDILTRPVEASPPTVV</sequence>
<comment type="function">
    <text evidence="1 4">May act as a substrate-specific adapter of an E3 ubiquitin-protein ligase complex (CUL3-RBX1-BTB) which mediates the ubiquitination and subsequent proteasomal degradation of target proteins (By similarity). In association with TCP24, exerts a negative role in cell proliferation in leaves, possibly by inhibiting mitotic DNA replication.</text>
</comment>
<comment type="pathway">
    <text>Protein modification; protein ubiquitination.</text>
</comment>
<comment type="subunit">
    <text evidence="4 5">Forms a heterodimeric complex with TCP24 (PubMed:18818695). Interacts with the origin recognition complex (preRC) components ORC1A, ORC1B, CDT1A and CDT1B (PubMed:18818695). Interacts with DUF7/AIP1 (PubMed:26538092).</text>
</comment>
<comment type="interaction">
    <interactant intactId="EBI-541722">
        <id>B7U179</id>
    </interactant>
    <interactant intactId="EBI-8079732">
        <id>Q9SJW9</id>
        <label>CDT1A</label>
    </interactant>
    <organismsDiffer>false</organismsDiffer>
    <experiments>3</experiments>
</comment>
<comment type="interaction">
    <interactant intactId="EBI-541722">
        <id>B7U179</id>
    </interactant>
    <interactant intactId="EBI-8079764">
        <id>Q9M1S9</id>
        <label>CDT1B</label>
    </interactant>
    <organismsDiffer>false</organismsDiffer>
    <experiments>2</experiments>
</comment>
<comment type="interaction">
    <interactant intactId="EBI-541722">
        <id>B7U179</id>
    </interactant>
    <interactant intactId="EBI-2651718">
        <id>Q710E8</id>
        <label>ORC1A</label>
    </interactant>
    <organismsDiffer>false</organismsDiffer>
    <experiments>9</experiments>
</comment>
<comment type="interaction">
    <interactant intactId="EBI-541722">
        <id>B7U179</id>
    </interactant>
    <interactant intactId="EBI-2114228">
        <id>Q9SU24</id>
        <label>ORC1B</label>
    </interactant>
    <organismsDiffer>false</organismsDiffer>
    <experiments>2</experiments>
</comment>
<comment type="interaction">
    <interactant intactId="EBI-541722">
        <id>B7U179</id>
    </interactant>
    <interactant intactId="EBI-8079833">
        <id>Q9C758</id>
        <label>TCP24</label>
    </interactant>
    <organismsDiffer>false</organismsDiffer>
    <experiments>4</experiments>
</comment>
<comment type="subcellular location">
    <subcellularLocation>
        <location evidence="4">Nucleus</location>
    </subcellularLocation>
</comment>
<comment type="tissue specificity">
    <text evidence="4">Weakly expressed in the emerging lateral roots and mainly expressed in the shoot apex, young leaves and flower buds.</text>
</comment>
<comment type="developmental stage">
    <text evidence="4">Detected in developing leaves during proliferation stage (9-day-old plants) and expression rapidly declines in leaves of 13 till 21-day-old plants. Also expressed during stomatal cell differentiation.</text>
</comment>
<comment type="domain">
    <text evidence="3">The BTB/POZ domain mediates the interaction with some component of ubiquitin ligase complexes.</text>
</comment>
<comment type="sequence caution" evidence="6">
    <conflict type="erroneous gene model prediction">
        <sequence resource="EMBL-CDS" id="CAC05434"/>
    </conflict>
</comment>
<evidence type="ECO:0000250" key="1"/>
<evidence type="ECO:0000255" key="2">
    <source>
        <dbReference type="PROSITE-ProRule" id="PRU00037"/>
    </source>
</evidence>
<evidence type="ECO:0000269" key="3">
    <source>
    </source>
</evidence>
<evidence type="ECO:0000269" key="4">
    <source>
    </source>
</evidence>
<evidence type="ECO:0000269" key="5">
    <source>
    </source>
</evidence>
<evidence type="ECO:0000305" key="6"/>
<name>ABAP1_ARATH</name>